<keyword id="KW-0002">3D-structure</keyword>
<keyword id="KW-1064">Adaptive immunity</keyword>
<keyword id="KW-1015">Disulfide bond</keyword>
<keyword id="KW-0325">Glycoprotein</keyword>
<keyword id="KW-0391">Immunity</keyword>
<keyword id="KW-0393">Immunoglobulin domain</keyword>
<keyword id="KW-0675">Receptor</keyword>
<keyword id="KW-1185">Reference proteome</keyword>
<keyword id="KW-0732">Signal</keyword>
<keyword id="KW-1279">T cell receptor</keyword>
<proteinExistence type="evidence at protein level"/>
<name>TVA3_MOUSE</name>
<sequence length="132" mass="14747">MNMRPDTCSVLVLLLMLRRNNGDSVTQTEGLVTLTEGLPVMLNCTYQSTYSPFLFWYVQHLNEAPKLLFKSFTDNKRPEHQGFHATLHKSSSSFHLQKSSAQLSDSALYYCALSNAGAKLTFGGGTRLTVRP</sequence>
<reference key="1">
    <citation type="journal article" date="1986" name="EMBO J.">
        <title>T cell receptor genes in an alloreactive CTL clone: implications for rearrangement and germline diversity of variable gene segments.</title>
        <authorList>
            <person name="Chou H.S."/>
            <person name="Behlke M.A."/>
            <person name="Godambe S.A."/>
            <person name="Russell J.H."/>
            <person name="Brooks C.G."/>
            <person name="Loh D.Y."/>
        </authorList>
    </citation>
    <scope>NUCLEOTIDE SEQUENCE</scope>
</reference>
<accession>P06323</accession>
<organism>
    <name type="scientific">Mus musculus</name>
    <name type="common">Mouse</name>
    <dbReference type="NCBI Taxonomy" id="10090"/>
    <lineage>
        <taxon>Eukaryota</taxon>
        <taxon>Metazoa</taxon>
        <taxon>Chordata</taxon>
        <taxon>Craniata</taxon>
        <taxon>Vertebrata</taxon>
        <taxon>Euteleostomi</taxon>
        <taxon>Mammalia</taxon>
        <taxon>Eutheria</taxon>
        <taxon>Euarchontoglires</taxon>
        <taxon>Glires</taxon>
        <taxon>Rodentia</taxon>
        <taxon>Myomorpha</taxon>
        <taxon>Muroidea</taxon>
        <taxon>Muridae</taxon>
        <taxon>Murinae</taxon>
        <taxon>Mus</taxon>
        <taxon>Mus</taxon>
    </lineage>
</organism>
<feature type="signal peptide">
    <location>
        <begin position="1"/>
        <end position="22"/>
    </location>
</feature>
<feature type="chain" id="PRO_0000033596" description="T-cell receptor alpha chain V region CTL-F3">
    <location>
        <begin position="23"/>
        <end position="132"/>
    </location>
</feature>
<feature type="region of interest" description="V segment">
    <location>
        <begin position="23"/>
        <end position="114"/>
    </location>
</feature>
<feature type="region of interest" description="J segment">
    <location>
        <begin position="115"/>
        <end position="132"/>
    </location>
</feature>
<feature type="glycosylation site" description="N-linked (GlcNAc...) asparagine" evidence="1">
    <location>
        <position position="43"/>
    </location>
</feature>
<feature type="disulfide bond" evidence="2">
    <location>
        <begin position="44"/>
        <end position="111"/>
    </location>
</feature>
<feature type="non-terminal residue">
    <location>
        <position position="132"/>
    </location>
</feature>
<dbReference type="PIR" id="A02014">
    <property type="entry name" value="RWMSA3"/>
</dbReference>
<dbReference type="PIR" id="A24891">
    <property type="entry name" value="A24891"/>
</dbReference>
<dbReference type="PDB" id="1AC6">
    <property type="method" value="X-ray"/>
    <property type="resolution" value="2.30 A"/>
    <property type="chains" value="A/B=23-129"/>
</dbReference>
<dbReference type="PDBsum" id="1AC6"/>
<dbReference type="SMR" id="P06323"/>
<dbReference type="FunCoup" id="P06323">
    <property type="interactions" value="516"/>
</dbReference>
<dbReference type="GlyGen" id="P06323">
    <property type="glycosylation" value="1 site"/>
</dbReference>
<dbReference type="InParanoid" id="P06323"/>
<dbReference type="Proteomes" id="UP000000589">
    <property type="component" value="Unplaced"/>
</dbReference>
<dbReference type="RNAct" id="P06323">
    <property type="molecule type" value="protein"/>
</dbReference>
<dbReference type="GO" id="GO:0042101">
    <property type="term" value="C:T cell receptor complex"/>
    <property type="evidence" value="ECO:0007669"/>
    <property type="project" value="UniProtKB-KW"/>
</dbReference>
<dbReference type="GO" id="GO:0002250">
    <property type="term" value="P:adaptive immune response"/>
    <property type="evidence" value="ECO:0007669"/>
    <property type="project" value="UniProtKB-KW"/>
</dbReference>
<dbReference type="CDD" id="cd04983">
    <property type="entry name" value="IgV_TCR_alpha"/>
    <property type="match status" value="1"/>
</dbReference>
<dbReference type="Gene3D" id="2.60.40.10">
    <property type="entry name" value="Immunoglobulins"/>
    <property type="match status" value="1"/>
</dbReference>
<dbReference type="InterPro" id="IPR007110">
    <property type="entry name" value="Ig-like_dom"/>
</dbReference>
<dbReference type="InterPro" id="IPR036179">
    <property type="entry name" value="Ig-like_dom_sf"/>
</dbReference>
<dbReference type="InterPro" id="IPR013783">
    <property type="entry name" value="Ig-like_fold"/>
</dbReference>
<dbReference type="InterPro" id="IPR003599">
    <property type="entry name" value="Ig_sub"/>
</dbReference>
<dbReference type="InterPro" id="IPR013106">
    <property type="entry name" value="Ig_V-set"/>
</dbReference>
<dbReference type="InterPro" id="IPR051287">
    <property type="entry name" value="TCR_variable_region"/>
</dbReference>
<dbReference type="PANTHER" id="PTHR19367:SF42">
    <property type="entry name" value="T CELL RECEPTOR ALPHA VARIABLE 18"/>
    <property type="match status" value="1"/>
</dbReference>
<dbReference type="PANTHER" id="PTHR19367">
    <property type="entry name" value="T-CELL RECEPTOR ALPHA CHAIN V REGION"/>
    <property type="match status" value="1"/>
</dbReference>
<dbReference type="Pfam" id="PF07686">
    <property type="entry name" value="V-set"/>
    <property type="match status" value="1"/>
</dbReference>
<dbReference type="SMART" id="SM00409">
    <property type="entry name" value="IG"/>
    <property type="match status" value="1"/>
</dbReference>
<dbReference type="SUPFAM" id="SSF48726">
    <property type="entry name" value="Immunoglobulin"/>
    <property type="match status" value="1"/>
</dbReference>
<dbReference type="PROSITE" id="PS50835">
    <property type="entry name" value="IG_LIKE"/>
    <property type="match status" value="1"/>
</dbReference>
<evidence type="ECO:0000255" key="1"/>
<evidence type="ECO:0000255" key="2">
    <source>
        <dbReference type="PROSITE-ProRule" id="PRU00114"/>
    </source>
</evidence>
<protein>
    <recommendedName>
        <fullName>T-cell receptor alpha chain V region CTL-F3</fullName>
    </recommendedName>
</protein>